<gene>
    <name evidence="1" type="primary">ruvB</name>
    <name type="ordered locus">MAV_3473</name>
</gene>
<comment type="function">
    <text evidence="1">The RuvA-RuvB-RuvC complex processes Holliday junction (HJ) DNA during genetic recombination and DNA repair, while the RuvA-RuvB complex plays an important role in the rescue of blocked DNA replication forks via replication fork reversal (RFR). RuvA specifically binds to HJ cruciform DNA, conferring on it an open structure. The RuvB hexamer acts as an ATP-dependent pump, pulling dsDNA into and through the RuvAB complex. RuvB forms 2 homohexamers on either side of HJ DNA bound by 1 or 2 RuvA tetramers; 4 subunits per hexamer contact DNA at a time. Coordinated motions by a converter formed by DNA-disengaged RuvB subunits stimulates ATP hydrolysis and nucleotide exchange. Immobilization of the converter enables RuvB to convert the ATP-contained energy into a lever motion, pulling 2 nucleotides of DNA out of the RuvA tetramer per ATP hydrolyzed, thus driving DNA branch migration. The RuvB motors rotate together with the DNA substrate, which together with the progressing nucleotide cycle form the mechanistic basis for DNA recombination by continuous HJ branch migration. Branch migration allows RuvC to scan DNA until it finds its consensus sequence, where it cleaves and resolves cruciform DNA.</text>
</comment>
<comment type="catalytic activity">
    <reaction evidence="1">
        <text>ATP + H2O = ADP + phosphate + H(+)</text>
        <dbReference type="Rhea" id="RHEA:13065"/>
        <dbReference type="ChEBI" id="CHEBI:15377"/>
        <dbReference type="ChEBI" id="CHEBI:15378"/>
        <dbReference type="ChEBI" id="CHEBI:30616"/>
        <dbReference type="ChEBI" id="CHEBI:43474"/>
        <dbReference type="ChEBI" id="CHEBI:456216"/>
    </reaction>
</comment>
<comment type="subunit">
    <text evidence="1">Homohexamer. Forms an RuvA(8)-RuvB(12)-Holliday junction (HJ) complex. HJ DNA is sandwiched between 2 RuvA tetramers; dsDNA enters through RuvA and exits via RuvB. An RuvB hexamer assembles on each DNA strand where it exits the tetramer. Each RuvB hexamer is contacted by two RuvA subunits (via domain III) on 2 adjacent RuvB subunits; this complex drives branch migration. In the full resolvosome a probable DNA-RuvA(4)-RuvB(12)-RuvC(2) complex forms which resolves the HJ.</text>
</comment>
<comment type="subcellular location">
    <subcellularLocation>
        <location evidence="1">Cytoplasm</location>
    </subcellularLocation>
</comment>
<comment type="domain">
    <text evidence="1">Has 3 domains, the large (RuvB-L) and small ATPase (RuvB-S) domains and the C-terminal head (RuvB-H) domain. The head domain binds DNA, while the ATPase domains jointly bind ATP, ADP or are empty depending on the state of the subunit in the translocation cycle. During a single DNA translocation step the structure of each domain remains the same, but their relative positions change.</text>
</comment>
<comment type="similarity">
    <text evidence="1">Belongs to the RuvB family.</text>
</comment>
<sequence length="351" mass="37188">MTAHDADWSDRDVSGALVPGEGDIDVSLRPRSLREFIGQPRVREQLQLVIEGAKNRGGTPDHILLSGPPGLGKTSLAMIIAAELGSSLRVTSGPALERAGDLAAMLSNLVEHDVLFIDEIHRIARPAEEMLYLAMEDFRVDVVVGKGPGATSIPLEVAPFTLVGATTRSGALTGPLRDRFGFTAHMDFYEPAELQQVLARSAGILGIELGAEAAEEIARRSRGTPRIANRLLRRVRDFAEVRADGVITRDVAKAALAVYDVDELGLDRLDRAVLTALTRSFGGGPVGVSTLAVAVGEEAATVEEVCEPFLVRAGMVARTPRGRVATAQAWTHLGMVPPAGAAGLGQPGLFD</sequence>
<proteinExistence type="inferred from homology"/>
<feature type="chain" id="PRO_1000001429" description="Holliday junction branch migration complex subunit RuvB">
    <location>
        <begin position="1"/>
        <end position="351"/>
    </location>
</feature>
<feature type="region of interest" description="Large ATPase domain (RuvB-L)" evidence="1">
    <location>
        <begin position="1"/>
        <end position="189"/>
    </location>
</feature>
<feature type="region of interest" description="Small ATPAse domain (RuvB-S)" evidence="1">
    <location>
        <begin position="190"/>
        <end position="260"/>
    </location>
</feature>
<feature type="region of interest" description="Head domain (RuvB-H)" evidence="1">
    <location>
        <begin position="263"/>
        <end position="351"/>
    </location>
</feature>
<feature type="binding site" evidence="1">
    <location>
        <position position="28"/>
    </location>
    <ligand>
        <name>ATP</name>
        <dbReference type="ChEBI" id="CHEBI:30616"/>
    </ligand>
</feature>
<feature type="binding site" evidence="1">
    <location>
        <position position="29"/>
    </location>
    <ligand>
        <name>ATP</name>
        <dbReference type="ChEBI" id="CHEBI:30616"/>
    </ligand>
</feature>
<feature type="binding site" evidence="1">
    <location>
        <position position="70"/>
    </location>
    <ligand>
        <name>ATP</name>
        <dbReference type="ChEBI" id="CHEBI:30616"/>
    </ligand>
</feature>
<feature type="binding site" evidence="1">
    <location>
        <position position="73"/>
    </location>
    <ligand>
        <name>ATP</name>
        <dbReference type="ChEBI" id="CHEBI:30616"/>
    </ligand>
</feature>
<feature type="binding site" evidence="1">
    <location>
        <position position="74"/>
    </location>
    <ligand>
        <name>ATP</name>
        <dbReference type="ChEBI" id="CHEBI:30616"/>
    </ligand>
</feature>
<feature type="binding site" evidence="1">
    <location>
        <position position="74"/>
    </location>
    <ligand>
        <name>Mg(2+)</name>
        <dbReference type="ChEBI" id="CHEBI:18420"/>
    </ligand>
</feature>
<feature type="binding site" evidence="1">
    <location>
        <position position="75"/>
    </location>
    <ligand>
        <name>ATP</name>
        <dbReference type="ChEBI" id="CHEBI:30616"/>
    </ligand>
</feature>
<feature type="binding site" evidence="1">
    <location>
        <begin position="136"/>
        <end position="138"/>
    </location>
    <ligand>
        <name>ATP</name>
        <dbReference type="ChEBI" id="CHEBI:30616"/>
    </ligand>
</feature>
<feature type="binding site" evidence="1">
    <location>
        <position position="179"/>
    </location>
    <ligand>
        <name>ATP</name>
        <dbReference type="ChEBI" id="CHEBI:30616"/>
    </ligand>
</feature>
<feature type="binding site" evidence="1">
    <location>
        <position position="189"/>
    </location>
    <ligand>
        <name>ATP</name>
        <dbReference type="ChEBI" id="CHEBI:30616"/>
    </ligand>
</feature>
<feature type="binding site" evidence="1">
    <location>
        <position position="226"/>
    </location>
    <ligand>
        <name>ATP</name>
        <dbReference type="ChEBI" id="CHEBI:30616"/>
    </ligand>
</feature>
<feature type="binding site" evidence="1">
    <location>
        <position position="318"/>
    </location>
    <ligand>
        <name>DNA</name>
        <dbReference type="ChEBI" id="CHEBI:16991"/>
    </ligand>
</feature>
<feature type="binding site" evidence="1">
    <location>
        <position position="323"/>
    </location>
    <ligand>
        <name>DNA</name>
        <dbReference type="ChEBI" id="CHEBI:16991"/>
    </ligand>
</feature>
<keyword id="KW-0067">ATP-binding</keyword>
<keyword id="KW-0963">Cytoplasm</keyword>
<keyword id="KW-0227">DNA damage</keyword>
<keyword id="KW-0233">DNA recombination</keyword>
<keyword id="KW-0234">DNA repair</keyword>
<keyword id="KW-0238">DNA-binding</keyword>
<keyword id="KW-0378">Hydrolase</keyword>
<keyword id="KW-0547">Nucleotide-binding</keyword>
<name>RUVB_MYCA1</name>
<evidence type="ECO:0000255" key="1">
    <source>
        <dbReference type="HAMAP-Rule" id="MF_00016"/>
    </source>
</evidence>
<accession>A0QIB7</accession>
<organism>
    <name type="scientific">Mycobacterium avium (strain 104)</name>
    <dbReference type="NCBI Taxonomy" id="243243"/>
    <lineage>
        <taxon>Bacteria</taxon>
        <taxon>Bacillati</taxon>
        <taxon>Actinomycetota</taxon>
        <taxon>Actinomycetes</taxon>
        <taxon>Mycobacteriales</taxon>
        <taxon>Mycobacteriaceae</taxon>
        <taxon>Mycobacterium</taxon>
        <taxon>Mycobacterium avium complex (MAC)</taxon>
    </lineage>
</organism>
<reference key="1">
    <citation type="submission" date="2006-10" db="EMBL/GenBank/DDBJ databases">
        <authorList>
            <person name="Fleischmann R.D."/>
            <person name="Dodson R.J."/>
            <person name="Haft D.H."/>
            <person name="Merkel J.S."/>
            <person name="Nelson W.C."/>
            <person name="Fraser C.M."/>
        </authorList>
    </citation>
    <scope>NUCLEOTIDE SEQUENCE [LARGE SCALE GENOMIC DNA]</scope>
    <source>
        <strain>104</strain>
    </source>
</reference>
<protein>
    <recommendedName>
        <fullName evidence="1">Holliday junction branch migration complex subunit RuvB</fullName>
        <ecNumber evidence="1">3.6.4.-</ecNumber>
    </recommendedName>
</protein>
<dbReference type="EC" id="3.6.4.-" evidence="1"/>
<dbReference type="EMBL" id="CP000479">
    <property type="protein sequence ID" value="ABK66887.1"/>
    <property type="molecule type" value="Genomic_DNA"/>
</dbReference>
<dbReference type="RefSeq" id="WP_003872684.1">
    <property type="nucleotide sequence ID" value="NC_008595.1"/>
</dbReference>
<dbReference type="SMR" id="A0QIB7"/>
<dbReference type="GeneID" id="75270869"/>
<dbReference type="KEGG" id="mav:MAV_3473"/>
<dbReference type="HOGENOM" id="CLU_055599_1_0_11"/>
<dbReference type="Proteomes" id="UP000001574">
    <property type="component" value="Chromosome"/>
</dbReference>
<dbReference type="GO" id="GO:0005737">
    <property type="term" value="C:cytoplasm"/>
    <property type="evidence" value="ECO:0007669"/>
    <property type="project" value="UniProtKB-SubCell"/>
</dbReference>
<dbReference type="GO" id="GO:0048476">
    <property type="term" value="C:Holliday junction resolvase complex"/>
    <property type="evidence" value="ECO:0007669"/>
    <property type="project" value="UniProtKB-UniRule"/>
</dbReference>
<dbReference type="GO" id="GO:0005524">
    <property type="term" value="F:ATP binding"/>
    <property type="evidence" value="ECO:0007669"/>
    <property type="project" value="UniProtKB-UniRule"/>
</dbReference>
<dbReference type="GO" id="GO:0016887">
    <property type="term" value="F:ATP hydrolysis activity"/>
    <property type="evidence" value="ECO:0007669"/>
    <property type="project" value="InterPro"/>
</dbReference>
<dbReference type="GO" id="GO:0000400">
    <property type="term" value="F:four-way junction DNA binding"/>
    <property type="evidence" value="ECO:0007669"/>
    <property type="project" value="UniProtKB-UniRule"/>
</dbReference>
<dbReference type="GO" id="GO:0009378">
    <property type="term" value="F:four-way junction helicase activity"/>
    <property type="evidence" value="ECO:0007669"/>
    <property type="project" value="InterPro"/>
</dbReference>
<dbReference type="GO" id="GO:0006310">
    <property type="term" value="P:DNA recombination"/>
    <property type="evidence" value="ECO:0007669"/>
    <property type="project" value="UniProtKB-UniRule"/>
</dbReference>
<dbReference type="GO" id="GO:0006281">
    <property type="term" value="P:DNA repair"/>
    <property type="evidence" value="ECO:0007669"/>
    <property type="project" value="UniProtKB-UniRule"/>
</dbReference>
<dbReference type="CDD" id="cd00009">
    <property type="entry name" value="AAA"/>
    <property type="match status" value="1"/>
</dbReference>
<dbReference type="Gene3D" id="1.10.8.60">
    <property type="match status" value="1"/>
</dbReference>
<dbReference type="Gene3D" id="3.40.50.300">
    <property type="entry name" value="P-loop containing nucleotide triphosphate hydrolases"/>
    <property type="match status" value="1"/>
</dbReference>
<dbReference type="Gene3D" id="1.10.10.10">
    <property type="entry name" value="Winged helix-like DNA-binding domain superfamily/Winged helix DNA-binding domain"/>
    <property type="match status" value="1"/>
</dbReference>
<dbReference type="HAMAP" id="MF_00016">
    <property type="entry name" value="DNA_HJ_migration_RuvB"/>
    <property type="match status" value="1"/>
</dbReference>
<dbReference type="InterPro" id="IPR003593">
    <property type="entry name" value="AAA+_ATPase"/>
</dbReference>
<dbReference type="InterPro" id="IPR041445">
    <property type="entry name" value="AAA_lid_4"/>
</dbReference>
<dbReference type="InterPro" id="IPR004605">
    <property type="entry name" value="DNA_helicase_Holl-junc_RuvB"/>
</dbReference>
<dbReference type="InterPro" id="IPR027417">
    <property type="entry name" value="P-loop_NTPase"/>
</dbReference>
<dbReference type="InterPro" id="IPR008824">
    <property type="entry name" value="RuvB-like_N"/>
</dbReference>
<dbReference type="InterPro" id="IPR008823">
    <property type="entry name" value="RuvB_C"/>
</dbReference>
<dbReference type="InterPro" id="IPR036388">
    <property type="entry name" value="WH-like_DNA-bd_sf"/>
</dbReference>
<dbReference type="InterPro" id="IPR036390">
    <property type="entry name" value="WH_DNA-bd_sf"/>
</dbReference>
<dbReference type="NCBIfam" id="NF000868">
    <property type="entry name" value="PRK00080.1"/>
    <property type="match status" value="1"/>
</dbReference>
<dbReference type="NCBIfam" id="TIGR00635">
    <property type="entry name" value="ruvB"/>
    <property type="match status" value="1"/>
</dbReference>
<dbReference type="PANTHER" id="PTHR42848">
    <property type="match status" value="1"/>
</dbReference>
<dbReference type="PANTHER" id="PTHR42848:SF1">
    <property type="entry name" value="HOLLIDAY JUNCTION BRANCH MIGRATION COMPLEX SUBUNIT RUVB"/>
    <property type="match status" value="1"/>
</dbReference>
<dbReference type="Pfam" id="PF17864">
    <property type="entry name" value="AAA_lid_4"/>
    <property type="match status" value="1"/>
</dbReference>
<dbReference type="Pfam" id="PF05491">
    <property type="entry name" value="RuvB_C"/>
    <property type="match status" value="1"/>
</dbReference>
<dbReference type="Pfam" id="PF05496">
    <property type="entry name" value="RuvB_N"/>
    <property type="match status" value="1"/>
</dbReference>
<dbReference type="SMART" id="SM00382">
    <property type="entry name" value="AAA"/>
    <property type="match status" value="1"/>
</dbReference>
<dbReference type="SUPFAM" id="SSF52540">
    <property type="entry name" value="P-loop containing nucleoside triphosphate hydrolases"/>
    <property type="match status" value="1"/>
</dbReference>
<dbReference type="SUPFAM" id="SSF46785">
    <property type="entry name" value="Winged helix' DNA-binding domain"/>
    <property type="match status" value="1"/>
</dbReference>